<gene>
    <name type="primary">SNX4</name>
    <name type="synonym">ATG24</name>
    <name type="ordered locus">CNBC0900</name>
</gene>
<organism>
    <name type="scientific">Cryptococcus neoformans var. neoformans serotype D (strain B-3501A)</name>
    <name type="common">Filobasidiella neoformans</name>
    <dbReference type="NCBI Taxonomy" id="283643"/>
    <lineage>
        <taxon>Eukaryota</taxon>
        <taxon>Fungi</taxon>
        <taxon>Dikarya</taxon>
        <taxon>Basidiomycota</taxon>
        <taxon>Agaricomycotina</taxon>
        <taxon>Tremellomycetes</taxon>
        <taxon>Tremellales</taxon>
        <taxon>Cryptococcaceae</taxon>
        <taxon>Cryptococcus</taxon>
        <taxon>Cryptococcus neoformans species complex</taxon>
    </lineage>
</organism>
<proteinExistence type="inferred from homology"/>
<accession>P0CR63</accession>
<accession>Q55WP9</accession>
<accession>Q5KJJ8</accession>
<comment type="function">
    <text evidence="1">Sorting nexin, involved in the separation or division of vacuoles throughout the entire life cycle of the cells. Involved in retrieval of late-Golgi SNAREs from post-Golgi endosomes to the trans-Golgi network, for cytoplasm to vacuole transport (Cvt), and autophagy of large cargos including mitophagy, pexophagy and glycophagy.</text>
</comment>
<comment type="subcellular location">
    <subcellularLocation>
        <location evidence="1">Cytoplasm</location>
        <location evidence="1">Cytosol</location>
    </subcellularLocation>
    <subcellularLocation>
        <location evidence="1">Preautophagosomal structure membrane</location>
        <topology evidence="1">Peripheral membrane protein</topology>
    </subcellularLocation>
    <subcellularLocation>
        <location evidence="1">Endosome membrane</location>
        <topology evidence="1">Peripheral membrane protein</topology>
    </subcellularLocation>
    <text evidence="1">Endosome and other perivacuolar punctate structures. Associates to phosphatidylinositol 3-phosphate, necessary for peripheral membrane localization to the perivacuolar punctate structures.</text>
</comment>
<comment type="domain">
    <text evidence="4">The PX domain binds phosphatidylinositol 3-phosphate which is necessary for peripheral membrane localization to the perivacuolar punctate structures.</text>
</comment>
<comment type="similarity">
    <text evidence="7">Belongs to the sorting nexin family.</text>
</comment>
<keyword id="KW-0072">Autophagy</keyword>
<keyword id="KW-0963">Cytoplasm</keyword>
<keyword id="KW-0967">Endosome</keyword>
<keyword id="KW-0446">Lipid-binding</keyword>
<keyword id="KW-0472">Membrane</keyword>
<keyword id="KW-0653">Protein transport</keyword>
<keyword id="KW-0813">Transport</keyword>
<name>SNX4_CRYNB</name>
<protein>
    <recommendedName>
        <fullName>Sorting nexin-4</fullName>
    </recommendedName>
    <alternativeName>
        <fullName>Autophagy-related protein 24</fullName>
    </alternativeName>
</protein>
<sequence>MDQDGFHSIAWDDAPSSNPPLSAPSPSQSPFEEGFESISPSSAQPPASDQYEGYDNSKAGEAGDVGVTLDRRERLGGHEVDGSVWNGKWMDVQVREPAKEHEGSKDMYVSYAVKTETSLPTFRKPLTVVRRRFQDFVFLREHLVKNFPACVVPPIPDKHRLEYIKGDRFSPEFVERRRLDLQRFADRIARHPVLQRSQLVNDFLQSTEWSVAKHHHISHPPPESHASLIDSLSDTFINAFSRVRKPDARFVEMTEELERFEEGLTGVERVVGRGKSRVDDLAADYQDMAAAYQGLGYLESGITEPLNRFAEKMLDFSTLLKHMNNTTIEPFLSSSHSLLSYSATHRNVIKLRDQKQLDFEELSAYLSAIVSERDRLAALSSGHTAAPVGLGTYLRDQMDKLRGTDDIHTRRERMRKMDGKIKELQDAVTLAHETSNAFSEEVIKEHAYFELEKKQEMKDALQAYTDGQVEMLQQAMDDWDRIIPLLQRIRVDV</sequence>
<dbReference type="EMBL" id="AAEY01000013">
    <property type="protein sequence ID" value="EAL21950.1"/>
    <property type="molecule type" value="Genomic_DNA"/>
</dbReference>
<dbReference type="RefSeq" id="XP_776597.1">
    <property type="nucleotide sequence ID" value="XM_771504.1"/>
</dbReference>
<dbReference type="SMR" id="P0CR63"/>
<dbReference type="EnsemblFungi" id="AAW42581">
    <property type="protein sequence ID" value="AAW42581"/>
    <property type="gene ID" value="CNC06300"/>
</dbReference>
<dbReference type="GeneID" id="4934754"/>
<dbReference type="KEGG" id="cnb:CNBC0900"/>
<dbReference type="VEuPathDB" id="FungiDB:CNBC0900"/>
<dbReference type="HOGENOM" id="CLU_027221_0_0_1"/>
<dbReference type="OrthoDB" id="3798at5206"/>
<dbReference type="GO" id="GO:0005829">
    <property type="term" value="C:cytosol"/>
    <property type="evidence" value="ECO:0007669"/>
    <property type="project" value="UniProtKB-SubCell"/>
</dbReference>
<dbReference type="GO" id="GO:0005769">
    <property type="term" value="C:early endosome"/>
    <property type="evidence" value="ECO:0007669"/>
    <property type="project" value="TreeGrafter"/>
</dbReference>
<dbReference type="GO" id="GO:0010008">
    <property type="term" value="C:endosome membrane"/>
    <property type="evidence" value="ECO:0007669"/>
    <property type="project" value="UniProtKB-SubCell"/>
</dbReference>
<dbReference type="GO" id="GO:0034045">
    <property type="term" value="C:phagophore assembly site membrane"/>
    <property type="evidence" value="ECO:0007669"/>
    <property type="project" value="UniProtKB-SubCell"/>
</dbReference>
<dbReference type="GO" id="GO:0035091">
    <property type="term" value="F:phosphatidylinositol binding"/>
    <property type="evidence" value="ECO:0007669"/>
    <property type="project" value="InterPro"/>
</dbReference>
<dbReference type="GO" id="GO:0000422">
    <property type="term" value="P:autophagy of mitochondrion"/>
    <property type="evidence" value="ECO:0007669"/>
    <property type="project" value="TreeGrafter"/>
</dbReference>
<dbReference type="GO" id="GO:0032456">
    <property type="term" value="P:endocytic recycling"/>
    <property type="evidence" value="ECO:0007669"/>
    <property type="project" value="TreeGrafter"/>
</dbReference>
<dbReference type="GO" id="GO:0034727">
    <property type="term" value="P:piecemeal microautophagy of the nucleus"/>
    <property type="evidence" value="ECO:0007669"/>
    <property type="project" value="TreeGrafter"/>
</dbReference>
<dbReference type="GO" id="GO:0015031">
    <property type="term" value="P:protein transport"/>
    <property type="evidence" value="ECO:0007669"/>
    <property type="project" value="UniProtKB-KW"/>
</dbReference>
<dbReference type="GO" id="GO:0061709">
    <property type="term" value="P:reticulophagy"/>
    <property type="evidence" value="ECO:0007669"/>
    <property type="project" value="TreeGrafter"/>
</dbReference>
<dbReference type="CDD" id="cd07628">
    <property type="entry name" value="BAR_Atg24p"/>
    <property type="match status" value="1"/>
</dbReference>
<dbReference type="CDD" id="cd06863">
    <property type="entry name" value="PX_Atg24p"/>
    <property type="match status" value="1"/>
</dbReference>
<dbReference type="FunFam" id="3.30.1520.10:FF:000049">
    <property type="entry name" value="Vacuolar sorting protein VPS1"/>
    <property type="match status" value="1"/>
</dbReference>
<dbReference type="FunFam" id="1.20.1270.60:FF:000042">
    <property type="entry name" value="Vacuolar targeting protein Atg24"/>
    <property type="match status" value="1"/>
</dbReference>
<dbReference type="Gene3D" id="1.20.1270.60">
    <property type="entry name" value="Arfaptin homology (AH) domain/BAR domain"/>
    <property type="match status" value="1"/>
</dbReference>
<dbReference type="Gene3D" id="3.30.1520.10">
    <property type="entry name" value="Phox-like domain"/>
    <property type="match status" value="1"/>
</dbReference>
<dbReference type="InterPro" id="IPR027267">
    <property type="entry name" value="AH/BAR_dom_sf"/>
</dbReference>
<dbReference type="InterPro" id="IPR001683">
    <property type="entry name" value="PX_dom"/>
</dbReference>
<dbReference type="InterPro" id="IPR036871">
    <property type="entry name" value="PX_dom_sf"/>
</dbReference>
<dbReference type="PANTHER" id="PTHR45949">
    <property type="entry name" value="SORTING NEXIN-4"/>
    <property type="match status" value="1"/>
</dbReference>
<dbReference type="PANTHER" id="PTHR45949:SF2">
    <property type="entry name" value="SORTING NEXIN-4"/>
    <property type="match status" value="1"/>
</dbReference>
<dbReference type="Pfam" id="PF00787">
    <property type="entry name" value="PX"/>
    <property type="match status" value="1"/>
</dbReference>
<dbReference type="SMART" id="SM00312">
    <property type="entry name" value="PX"/>
    <property type="match status" value="1"/>
</dbReference>
<dbReference type="SUPFAM" id="SSF64268">
    <property type="entry name" value="PX domain"/>
    <property type="match status" value="1"/>
</dbReference>
<dbReference type="PROSITE" id="PS50195">
    <property type="entry name" value="PX"/>
    <property type="match status" value="1"/>
</dbReference>
<evidence type="ECO:0000250" key="1">
    <source>
        <dbReference type="UniProtKB" id="P47057"/>
    </source>
</evidence>
<evidence type="ECO:0000250" key="2">
    <source>
        <dbReference type="UniProtKB" id="Q3UR97"/>
    </source>
</evidence>
<evidence type="ECO:0000250" key="3">
    <source>
        <dbReference type="UniProtKB" id="Q6P4T1"/>
    </source>
</evidence>
<evidence type="ECO:0000250" key="4">
    <source>
        <dbReference type="UniProtKB" id="Q96L94"/>
    </source>
</evidence>
<evidence type="ECO:0000255" key="5">
    <source>
        <dbReference type="PROSITE-ProRule" id="PRU00147"/>
    </source>
</evidence>
<evidence type="ECO:0000256" key="6">
    <source>
        <dbReference type="SAM" id="MobiDB-lite"/>
    </source>
</evidence>
<evidence type="ECO:0000305" key="7"/>
<reference key="1">
    <citation type="journal article" date="2005" name="Science">
        <title>The genome of the basidiomycetous yeast and human pathogen Cryptococcus neoformans.</title>
        <authorList>
            <person name="Loftus B.J."/>
            <person name="Fung E."/>
            <person name="Roncaglia P."/>
            <person name="Rowley D."/>
            <person name="Amedeo P."/>
            <person name="Bruno D."/>
            <person name="Vamathevan J."/>
            <person name="Miranda M."/>
            <person name="Anderson I.J."/>
            <person name="Fraser J.A."/>
            <person name="Allen J.E."/>
            <person name="Bosdet I.E."/>
            <person name="Brent M.R."/>
            <person name="Chiu R."/>
            <person name="Doering T.L."/>
            <person name="Donlin M.J."/>
            <person name="D'Souza C.A."/>
            <person name="Fox D.S."/>
            <person name="Grinberg V."/>
            <person name="Fu J."/>
            <person name="Fukushima M."/>
            <person name="Haas B.J."/>
            <person name="Huang J.C."/>
            <person name="Janbon G."/>
            <person name="Jones S.J.M."/>
            <person name="Koo H.L."/>
            <person name="Krzywinski M.I."/>
            <person name="Kwon-Chung K.J."/>
            <person name="Lengeler K.B."/>
            <person name="Maiti R."/>
            <person name="Marra M.A."/>
            <person name="Marra R.E."/>
            <person name="Mathewson C.A."/>
            <person name="Mitchell T.G."/>
            <person name="Pertea M."/>
            <person name="Riggs F.R."/>
            <person name="Salzberg S.L."/>
            <person name="Schein J.E."/>
            <person name="Shvartsbeyn A."/>
            <person name="Shin H."/>
            <person name="Shumway M."/>
            <person name="Specht C.A."/>
            <person name="Suh B.B."/>
            <person name="Tenney A."/>
            <person name="Utterback T.R."/>
            <person name="Wickes B.L."/>
            <person name="Wortman J.R."/>
            <person name="Wye N.H."/>
            <person name="Kronstad J.W."/>
            <person name="Lodge J.K."/>
            <person name="Heitman J."/>
            <person name="Davis R.W."/>
            <person name="Fraser C.M."/>
            <person name="Hyman R.W."/>
        </authorList>
    </citation>
    <scope>NUCLEOTIDE SEQUENCE [LARGE SCALE GENOMIC DNA]</scope>
    <source>
        <strain>B-3501A</strain>
    </source>
</reference>
<feature type="chain" id="PRO_0000410293" description="Sorting nexin-4">
    <location>
        <begin position="1"/>
        <end position="493"/>
    </location>
</feature>
<feature type="domain" description="PX" evidence="5">
    <location>
        <begin position="89"/>
        <end position="211"/>
    </location>
</feature>
<feature type="region of interest" description="Disordered" evidence="6">
    <location>
        <begin position="1"/>
        <end position="67"/>
    </location>
</feature>
<feature type="compositionally biased region" description="Low complexity" evidence="6">
    <location>
        <begin position="37"/>
        <end position="48"/>
    </location>
</feature>
<feature type="binding site" evidence="2">
    <location>
        <position position="132"/>
    </location>
    <ligand>
        <name>a 1,2-diacyl-sn-glycero-3-phospho-(1D-myo-inositol-3-phosphate)</name>
        <dbReference type="ChEBI" id="CHEBI:58088"/>
    </ligand>
</feature>
<feature type="binding site" evidence="4">
    <location>
        <position position="158"/>
    </location>
    <ligand>
        <name>a 1,2-diacyl-sn-glycero-3-phospho-(1D-myo-inositol-3-phosphate)</name>
        <dbReference type="ChEBI" id="CHEBI:58088"/>
    </ligand>
</feature>
<feature type="binding site" evidence="3">
    <location>
        <position position="177"/>
    </location>
    <ligand>
        <name>a 1,2-diacyl-sn-glycero-3-phospho-(1D-myo-inositol-3-phosphate)</name>
        <dbReference type="ChEBI" id="CHEBI:58088"/>
    </ligand>
</feature>